<sequence length="434" mass="50571">MTFEEKRVGHNIINQLPDSLLCEIFFNLPTEEVVKTSLICRRWRYVWQSLPGLDLVINGSKNYDKFDFLERFMFLQRVKLRYVGYGHNCRNMTSMMMNNVIKHKIQHLDVGSNRRYVYDRVEIPPTIYTSCERLVFLKLHRANLPKSPDSVSLPCLKIMDLQKINFVDSLDMEKLVSVCPALETLTMDKMYGAKVSSQSLLSFCLTNNETGYLKTQVVMQTPKLKYLKLNRQFIQRIVINDLSSIVMLNLDDVAYFGETLLSILKLISCVRDLTISFDILQDYRHFSKSKSLPKFHKLSVLSVKDMAVGSWESLLIFLESCQNLKSLVMGFRDYNWGINFSDVPQCVLSSLEFVEVKAREVADMKKLWSYFMENSTVLKKFTLCLDHIEDQRDHVMLSKLFTFPRRSNKCEVVVRLRTFGTYKPMSMFSCADGF</sequence>
<feature type="chain" id="PRO_0000283097" description="Putative F-box/FBD/LRR-repeat protein At1g16940">
    <location>
        <begin position="1"/>
        <end position="434"/>
    </location>
</feature>
<feature type="domain" description="F-box" evidence="1">
    <location>
        <begin position="10"/>
        <end position="66"/>
    </location>
</feature>
<feature type="repeat" description="LRR 1">
    <location>
        <begin position="72"/>
        <end position="99"/>
    </location>
</feature>
<feature type="repeat" description="LRR 2">
    <location>
        <begin position="114"/>
        <end position="141"/>
    </location>
</feature>
<feature type="repeat" description="LRR 3">
    <location>
        <begin position="164"/>
        <end position="189"/>
    </location>
</feature>
<feature type="repeat" description="LRR 4">
    <location>
        <begin position="204"/>
        <end position="231"/>
    </location>
</feature>
<feature type="repeat" description="LRR 5">
    <location>
        <begin position="252"/>
        <end position="277"/>
    </location>
</feature>
<feature type="repeat" description="LRR 6">
    <location>
        <begin position="306"/>
        <end position="331"/>
    </location>
</feature>
<feature type="domain" description="FBD">
    <location>
        <begin position="336"/>
        <end position="385"/>
    </location>
</feature>
<accession>Q9FZ53</accession>
<dbReference type="EMBL" id="AC051629">
    <property type="protein sequence ID" value="AAF99839.1"/>
    <property type="molecule type" value="Genomic_DNA"/>
</dbReference>
<dbReference type="EMBL" id="CP002684">
    <property type="protein sequence ID" value="AEE29524.1"/>
    <property type="molecule type" value="Genomic_DNA"/>
</dbReference>
<dbReference type="PIR" id="A86305">
    <property type="entry name" value="A86305"/>
</dbReference>
<dbReference type="RefSeq" id="NP_173138.1">
    <property type="nucleotide sequence ID" value="NM_101555.1"/>
</dbReference>
<dbReference type="STRING" id="3702.Q9FZ53"/>
<dbReference type="PaxDb" id="3702-AT1G16940.1"/>
<dbReference type="EnsemblPlants" id="AT1G16940.1">
    <property type="protein sequence ID" value="AT1G16940.1"/>
    <property type="gene ID" value="AT1G16940"/>
</dbReference>
<dbReference type="GeneID" id="838265"/>
<dbReference type="Gramene" id="AT1G16940.1">
    <property type="protein sequence ID" value="AT1G16940.1"/>
    <property type="gene ID" value="AT1G16940"/>
</dbReference>
<dbReference type="KEGG" id="ath:AT1G16940"/>
<dbReference type="Araport" id="AT1G16940"/>
<dbReference type="TAIR" id="AT1G16940"/>
<dbReference type="HOGENOM" id="CLU_010721_1_2_1"/>
<dbReference type="InParanoid" id="Q9FZ53"/>
<dbReference type="OMA" id="SYFMANS"/>
<dbReference type="PhylomeDB" id="Q9FZ53"/>
<dbReference type="PRO" id="PR:Q9FZ53"/>
<dbReference type="Proteomes" id="UP000006548">
    <property type="component" value="Chromosome 1"/>
</dbReference>
<dbReference type="ExpressionAtlas" id="Q9FZ53">
    <property type="expression patterns" value="baseline and differential"/>
</dbReference>
<dbReference type="CDD" id="cd22160">
    <property type="entry name" value="F-box_AtFBL13-like"/>
    <property type="match status" value="1"/>
</dbReference>
<dbReference type="Gene3D" id="1.20.1280.50">
    <property type="match status" value="1"/>
</dbReference>
<dbReference type="Gene3D" id="3.80.10.10">
    <property type="entry name" value="Ribonuclease Inhibitor"/>
    <property type="match status" value="1"/>
</dbReference>
<dbReference type="InterPro" id="IPR036047">
    <property type="entry name" value="F-box-like_dom_sf"/>
</dbReference>
<dbReference type="InterPro" id="IPR053781">
    <property type="entry name" value="F-box_AtFBL13-like"/>
</dbReference>
<dbReference type="InterPro" id="IPR001810">
    <property type="entry name" value="F-box_dom"/>
</dbReference>
<dbReference type="InterPro" id="IPR006566">
    <property type="entry name" value="FBD"/>
</dbReference>
<dbReference type="InterPro" id="IPR050232">
    <property type="entry name" value="FBL13/AtMIF1-like"/>
</dbReference>
<dbReference type="InterPro" id="IPR032675">
    <property type="entry name" value="LRR_dom_sf"/>
</dbReference>
<dbReference type="InterPro" id="IPR055411">
    <property type="entry name" value="LRR_FXL15/At3g58940/PEG3-like"/>
</dbReference>
<dbReference type="PANTHER" id="PTHR31900">
    <property type="entry name" value="F-BOX/RNI SUPERFAMILY PROTEIN-RELATED"/>
    <property type="match status" value="1"/>
</dbReference>
<dbReference type="PANTHER" id="PTHR31900:SF33">
    <property type="entry name" value="PROTEIN WITH RNI-LIKE_FBD-LIKE DOMAIN"/>
    <property type="match status" value="1"/>
</dbReference>
<dbReference type="Pfam" id="PF00646">
    <property type="entry name" value="F-box"/>
    <property type="match status" value="1"/>
</dbReference>
<dbReference type="Pfam" id="PF08387">
    <property type="entry name" value="FBD"/>
    <property type="match status" value="1"/>
</dbReference>
<dbReference type="Pfam" id="PF24758">
    <property type="entry name" value="LRR_At5g56370"/>
    <property type="match status" value="1"/>
</dbReference>
<dbReference type="SMART" id="SM00579">
    <property type="entry name" value="FBD"/>
    <property type="match status" value="1"/>
</dbReference>
<dbReference type="SMART" id="SM00256">
    <property type="entry name" value="FBOX"/>
    <property type="match status" value="1"/>
</dbReference>
<dbReference type="SUPFAM" id="SSF81383">
    <property type="entry name" value="F-box domain"/>
    <property type="match status" value="1"/>
</dbReference>
<dbReference type="SUPFAM" id="SSF52047">
    <property type="entry name" value="RNI-like"/>
    <property type="match status" value="1"/>
</dbReference>
<dbReference type="PROSITE" id="PS50181">
    <property type="entry name" value="FBOX"/>
    <property type="match status" value="1"/>
</dbReference>
<dbReference type="PROSITE" id="PS00678">
    <property type="entry name" value="WD_REPEATS_1"/>
    <property type="match status" value="1"/>
</dbReference>
<gene>
    <name type="ordered locus">At1g16940</name>
    <name type="ORF">F6I1.5</name>
</gene>
<protein>
    <recommendedName>
        <fullName>Putative F-box/FBD/LRR-repeat protein At1g16940</fullName>
    </recommendedName>
</protein>
<evidence type="ECO:0000255" key="1">
    <source>
        <dbReference type="PROSITE-ProRule" id="PRU00080"/>
    </source>
</evidence>
<proteinExistence type="predicted"/>
<name>FDL4_ARATH</name>
<reference key="1">
    <citation type="journal article" date="2000" name="Nature">
        <title>Sequence and analysis of chromosome 1 of the plant Arabidopsis thaliana.</title>
        <authorList>
            <person name="Theologis A."/>
            <person name="Ecker J.R."/>
            <person name="Palm C.J."/>
            <person name="Federspiel N.A."/>
            <person name="Kaul S."/>
            <person name="White O."/>
            <person name="Alonso J."/>
            <person name="Altafi H."/>
            <person name="Araujo R."/>
            <person name="Bowman C.L."/>
            <person name="Brooks S.Y."/>
            <person name="Buehler E."/>
            <person name="Chan A."/>
            <person name="Chao Q."/>
            <person name="Chen H."/>
            <person name="Cheuk R.F."/>
            <person name="Chin C.W."/>
            <person name="Chung M.K."/>
            <person name="Conn L."/>
            <person name="Conway A.B."/>
            <person name="Conway A.R."/>
            <person name="Creasy T.H."/>
            <person name="Dewar K."/>
            <person name="Dunn P."/>
            <person name="Etgu P."/>
            <person name="Feldblyum T.V."/>
            <person name="Feng J.-D."/>
            <person name="Fong B."/>
            <person name="Fujii C.Y."/>
            <person name="Gill J.E."/>
            <person name="Goldsmith A.D."/>
            <person name="Haas B."/>
            <person name="Hansen N.F."/>
            <person name="Hughes B."/>
            <person name="Huizar L."/>
            <person name="Hunter J.L."/>
            <person name="Jenkins J."/>
            <person name="Johnson-Hopson C."/>
            <person name="Khan S."/>
            <person name="Khaykin E."/>
            <person name="Kim C.J."/>
            <person name="Koo H.L."/>
            <person name="Kremenetskaia I."/>
            <person name="Kurtz D.B."/>
            <person name="Kwan A."/>
            <person name="Lam B."/>
            <person name="Langin-Hooper S."/>
            <person name="Lee A."/>
            <person name="Lee J.M."/>
            <person name="Lenz C.A."/>
            <person name="Li J.H."/>
            <person name="Li Y.-P."/>
            <person name="Lin X."/>
            <person name="Liu S.X."/>
            <person name="Liu Z.A."/>
            <person name="Luros J.S."/>
            <person name="Maiti R."/>
            <person name="Marziali A."/>
            <person name="Militscher J."/>
            <person name="Miranda M."/>
            <person name="Nguyen M."/>
            <person name="Nierman W.C."/>
            <person name="Osborne B.I."/>
            <person name="Pai G."/>
            <person name="Peterson J."/>
            <person name="Pham P.K."/>
            <person name="Rizzo M."/>
            <person name="Rooney T."/>
            <person name="Rowley D."/>
            <person name="Sakano H."/>
            <person name="Salzberg S.L."/>
            <person name="Schwartz J.R."/>
            <person name="Shinn P."/>
            <person name="Southwick A.M."/>
            <person name="Sun H."/>
            <person name="Tallon L.J."/>
            <person name="Tambunga G."/>
            <person name="Toriumi M.J."/>
            <person name="Town C.D."/>
            <person name="Utterback T."/>
            <person name="Van Aken S."/>
            <person name="Vaysberg M."/>
            <person name="Vysotskaia V.S."/>
            <person name="Walker M."/>
            <person name="Wu D."/>
            <person name="Yu G."/>
            <person name="Fraser C.M."/>
            <person name="Venter J.C."/>
            <person name="Davis R.W."/>
        </authorList>
    </citation>
    <scope>NUCLEOTIDE SEQUENCE [LARGE SCALE GENOMIC DNA]</scope>
    <source>
        <strain>cv. Columbia</strain>
    </source>
</reference>
<reference key="2">
    <citation type="journal article" date="2017" name="Plant J.">
        <title>Araport11: a complete reannotation of the Arabidopsis thaliana reference genome.</title>
        <authorList>
            <person name="Cheng C.Y."/>
            <person name="Krishnakumar V."/>
            <person name="Chan A.P."/>
            <person name="Thibaud-Nissen F."/>
            <person name="Schobel S."/>
            <person name="Town C.D."/>
        </authorList>
    </citation>
    <scope>GENOME REANNOTATION</scope>
    <source>
        <strain>cv. Columbia</strain>
    </source>
</reference>
<organism>
    <name type="scientific">Arabidopsis thaliana</name>
    <name type="common">Mouse-ear cress</name>
    <dbReference type="NCBI Taxonomy" id="3702"/>
    <lineage>
        <taxon>Eukaryota</taxon>
        <taxon>Viridiplantae</taxon>
        <taxon>Streptophyta</taxon>
        <taxon>Embryophyta</taxon>
        <taxon>Tracheophyta</taxon>
        <taxon>Spermatophyta</taxon>
        <taxon>Magnoliopsida</taxon>
        <taxon>eudicotyledons</taxon>
        <taxon>Gunneridae</taxon>
        <taxon>Pentapetalae</taxon>
        <taxon>rosids</taxon>
        <taxon>malvids</taxon>
        <taxon>Brassicales</taxon>
        <taxon>Brassicaceae</taxon>
        <taxon>Camelineae</taxon>
        <taxon>Arabidopsis</taxon>
    </lineage>
</organism>
<keyword id="KW-0433">Leucine-rich repeat</keyword>
<keyword id="KW-1185">Reference proteome</keyword>
<keyword id="KW-0677">Repeat</keyword>